<comment type="function">
    <text evidence="1">Cotranslationally removes the N-terminal methionine from nascent proteins. The N-terminal methionine is often cleaved when the second residue in the primary sequence is small and uncharged (Met-Ala-, Cys, Gly, Pro, Ser, Thr, or Val).</text>
</comment>
<comment type="catalytic activity">
    <reaction evidence="1">
        <text>Release of N-terminal amino acids, preferentially methionine, from peptides and arylamides.</text>
        <dbReference type="EC" id="3.4.11.18"/>
    </reaction>
</comment>
<comment type="cofactor">
    <cofactor evidence="1">
        <name>Co(2+)</name>
        <dbReference type="ChEBI" id="CHEBI:48828"/>
    </cofactor>
    <cofactor evidence="1">
        <name>Zn(2+)</name>
        <dbReference type="ChEBI" id="CHEBI:29105"/>
    </cofactor>
    <cofactor evidence="1">
        <name>Mn(2+)</name>
        <dbReference type="ChEBI" id="CHEBI:29035"/>
    </cofactor>
    <cofactor evidence="1">
        <name>Fe(2+)</name>
        <dbReference type="ChEBI" id="CHEBI:29033"/>
    </cofactor>
    <text evidence="1">Binds 2 divalent metal cations per subunit. Has a high-affinity and a low affinity metal-binding site. The true nature of the physiological cofactor is under debate. The enzyme is active with cobalt, zinc, manganese or divalent iron ions. Most likely, methionine aminopeptidases function as mononuclear Fe(2+)-metalloproteases under physiological conditions, and the catalytically relevant metal-binding site has been assigned to the histidine-containing high-affinity site.</text>
</comment>
<comment type="subcellular location">
    <subcellularLocation>
        <location evidence="1">Cytoplasm</location>
    </subcellularLocation>
</comment>
<comment type="similarity">
    <text evidence="1">Belongs to the peptidase M24A family. Methionine aminopeptidase eukaryotic type 2 subfamily.</text>
</comment>
<proteinExistence type="inferred from homology"/>
<reference key="1">
    <citation type="journal article" date="2015" name="PLoS Genet.">
        <title>The dynamic genome and transcriptome of the human fungal pathogen Blastomyces and close relative Emmonsia.</title>
        <authorList>
            <person name="Munoz J.F."/>
            <person name="Gauthier G.M."/>
            <person name="Desjardins C.A."/>
            <person name="Gallo J.E."/>
            <person name="Holder J."/>
            <person name="Sullivan T.D."/>
            <person name="Marty A.J."/>
            <person name="Carmen J.C."/>
            <person name="Chen Z."/>
            <person name="Ding L."/>
            <person name="Gujja S."/>
            <person name="Magrini V."/>
            <person name="Misas E."/>
            <person name="Mitreva M."/>
            <person name="Priest M."/>
            <person name="Saif S."/>
            <person name="Whiston E.A."/>
            <person name="Young S."/>
            <person name="Zeng Q."/>
            <person name="Goldman W.E."/>
            <person name="Mardis E.R."/>
            <person name="Taylor J.W."/>
            <person name="McEwen J.G."/>
            <person name="Clay O.K."/>
            <person name="Klein B.S."/>
            <person name="Cuomo C.A."/>
        </authorList>
    </citation>
    <scope>NUCLEOTIDE SEQUENCE [LARGE SCALE GENOMIC DNA]</scope>
    <source>
        <strain>ER-3 / ATCC MYA-2586</strain>
    </source>
</reference>
<organism>
    <name type="scientific">Ajellomyces dermatitidis (strain ER-3 / ATCC MYA-2586)</name>
    <name type="common">Blastomyces dermatitidis</name>
    <dbReference type="NCBI Taxonomy" id="559297"/>
    <lineage>
        <taxon>Eukaryota</taxon>
        <taxon>Fungi</taxon>
        <taxon>Dikarya</taxon>
        <taxon>Ascomycota</taxon>
        <taxon>Pezizomycotina</taxon>
        <taxon>Eurotiomycetes</taxon>
        <taxon>Eurotiomycetidae</taxon>
        <taxon>Onygenales</taxon>
        <taxon>Ajellomycetaceae</taxon>
        <taxon>Blastomyces</taxon>
    </lineage>
</organism>
<gene>
    <name type="ORF">BDCG_05228</name>
</gene>
<feature type="chain" id="PRO_0000407616" description="Methionine aminopeptidase 2-2">
    <location>
        <begin position="1"/>
        <end position="465"/>
    </location>
</feature>
<feature type="region of interest" description="Disordered" evidence="2">
    <location>
        <begin position="1"/>
        <end position="92"/>
    </location>
</feature>
<feature type="compositionally biased region" description="Basic and acidic residues" evidence="2">
    <location>
        <begin position="1"/>
        <end position="13"/>
    </location>
</feature>
<feature type="compositionally biased region" description="Acidic residues" evidence="2">
    <location>
        <begin position="44"/>
        <end position="55"/>
    </location>
</feature>
<feature type="compositionally biased region" description="Basic residues" evidence="2">
    <location>
        <begin position="71"/>
        <end position="86"/>
    </location>
</feature>
<feature type="binding site" evidence="1">
    <location>
        <position position="217"/>
    </location>
    <ligand>
        <name>substrate</name>
    </ligand>
</feature>
<feature type="binding site" evidence="1">
    <location>
        <position position="238"/>
    </location>
    <ligand>
        <name>a divalent metal cation</name>
        <dbReference type="ChEBI" id="CHEBI:60240"/>
        <label>1</label>
    </ligand>
</feature>
<feature type="binding site" evidence="1">
    <location>
        <position position="249"/>
    </location>
    <ligand>
        <name>a divalent metal cation</name>
        <dbReference type="ChEBI" id="CHEBI:60240"/>
        <label>1</label>
    </ligand>
</feature>
<feature type="binding site" evidence="1">
    <location>
        <position position="249"/>
    </location>
    <ligand>
        <name>a divalent metal cation</name>
        <dbReference type="ChEBI" id="CHEBI:60240"/>
        <label>2</label>
        <note>catalytic</note>
    </ligand>
</feature>
<feature type="binding site" evidence="1">
    <location>
        <position position="318"/>
    </location>
    <ligand>
        <name>a divalent metal cation</name>
        <dbReference type="ChEBI" id="CHEBI:60240"/>
        <label>2</label>
        <note>catalytic</note>
    </ligand>
</feature>
<feature type="binding site" evidence="1">
    <location>
        <position position="326"/>
    </location>
    <ligand>
        <name>substrate</name>
    </ligand>
</feature>
<feature type="binding site" evidence="1">
    <location>
        <position position="351"/>
    </location>
    <ligand>
        <name>a divalent metal cation</name>
        <dbReference type="ChEBI" id="CHEBI:60240"/>
        <label>2</label>
        <note>catalytic</note>
    </ligand>
</feature>
<feature type="binding site" evidence="1">
    <location>
        <position position="446"/>
    </location>
    <ligand>
        <name>a divalent metal cation</name>
        <dbReference type="ChEBI" id="CHEBI:60240"/>
        <label>1</label>
    </ligand>
</feature>
<feature type="binding site" evidence="1">
    <location>
        <position position="446"/>
    </location>
    <ligand>
        <name>a divalent metal cation</name>
        <dbReference type="ChEBI" id="CHEBI:60240"/>
        <label>2</label>
        <note>catalytic</note>
    </ligand>
</feature>
<sequence>MGSKTPNDHRRGPNVESSPHAAIDTINPPKHAAASGLLHGPLEGETEDGEDEDDDKTGADLKSVGQLNNSTKKKNKRKKNKKKKKTLLGGLQTTPPRVALSSIFYDQRYPEAEIVGYTTNNDNLQRITAEEFRHLCVVNDMDDEFLNDYRKAAEVHRQVRQYVQTITKPGIAMSQLAQEIEDGVRALTDHQGIETGDALKAGMAFPTGLCLNNIGAHWTPNPGAKEVILQYDDVLKVDFGVHVNGRIVDSAYTMAFNPVYDDLLTAVKAATNTGLKEAGIDARIDCISEAIQEVMESYEVELNRKIIPVKAVRNITGHNILRYKIHGDKQVPFVKTHTNQRMEEGDIFAIETFGSTGKAYLDDDIGIYGYFCDEHASAAGLHHSSAKSLLKTIKDNFGTLVFSRRYLERLGVKSYHLGMRSLVSKGIVQSYAPLVDVPGSYVAQFEHTVLLRPNCKEVISRGDDY</sequence>
<dbReference type="EC" id="3.4.11.18" evidence="1"/>
<dbReference type="EMBL" id="EQ999977">
    <property type="protein sequence ID" value="EEQ90108.2"/>
    <property type="molecule type" value="Genomic_DNA"/>
</dbReference>
<dbReference type="RefSeq" id="XP_045276895.1">
    <property type="nucleotide sequence ID" value="XM_045420890.1"/>
</dbReference>
<dbReference type="SMR" id="C5GLJ6"/>
<dbReference type="STRING" id="559297.C5GLJ6"/>
<dbReference type="GeneID" id="69027263"/>
<dbReference type="eggNOG" id="KOG2775">
    <property type="taxonomic scope" value="Eukaryota"/>
</dbReference>
<dbReference type="HOGENOM" id="CLU_015857_7_1_1"/>
<dbReference type="OMA" id="ILRYHIH"/>
<dbReference type="GO" id="GO:0005737">
    <property type="term" value="C:cytoplasm"/>
    <property type="evidence" value="ECO:0007669"/>
    <property type="project" value="UniProtKB-SubCell"/>
</dbReference>
<dbReference type="GO" id="GO:0004239">
    <property type="term" value="F:initiator methionyl aminopeptidase activity"/>
    <property type="evidence" value="ECO:0007669"/>
    <property type="project" value="UniProtKB-UniRule"/>
</dbReference>
<dbReference type="GO" id="GO:0046872">
    <property type="term" value="F:metal ion binding"/>
    <property type="evidence" value="ECO:0007669"/>
    <property type="project" value="UniProtKB-UniRule"/>
</dbReference>
<dbReference type="GO" id="GO:0070006">
    <property type="term" value="F:metalloaminopeptidase activity"/>
    <property type="evidence" value="ECO:0007669"/>
    <property type="project" value="UniProtKB-UniRule"/>
</dbReference>
<dbReference type="GO" id="GO:0006508">
    <property type="term" value="P:proteolysis"/>
    <property type="evidence" value="ECO:0007669"/>
    <property type="project" value="UniProtKB-KW"/>
</dbReference>
<dbReference type="CDD" id="cd01088">
    <property type="entry name" value="MetAP2"/>
    <property type="match status" value="1"/>
</dbReference>
<dbReference type="Gene3D" id="3.90.230.10">
    <property type="entry name" value="Creatinase/methionine aminopeptidase superfamily"/>
    <property type="match status" value="1"/>
</dbReference>
<dbReference type="Gene3D" id="1.10.10.10">
    <property type="entry name" value="Winged helix-like DNA-binding domain superfamily/Winged helix DNA-binding domain"/>
    <property type="match status" value="1"/>
</dbReference>
<dbReference type="HAMAP" id="MF_03175">
    <property type="entry name" value="MetAP_2_euk"/>
    <property type="match status" value="1"/>
</dbReference>
<dbReference type="InterPro" id="IPR036005">
    <property type="entry name" value="Creatinase/aminopeptidase-like"/>
</dbReference>
<dbReference type="InterPro" id="IPR050247">
    <property type="entry name" value="Met_Aminopeptidase_Type2"/>
</dbReference>
<dbReference type="InterPro" id="IPR000994">
    <property type="entry name" value="Pept_M24"/>
</dbReference>
<dbReference type="InterPro" id="IPR001714">
    <property type="entry name" value="Pept_M24_MAP"/>
</dbReference>
<dbReference type="InterPro" id="IPR002468">
    <property type="entry name" value="Pept_M24A_MAP2"/>
</dbReference>
<dbReference type="InterPro" id="IPR018349">
    <property type="entry name" value="Pept_M24A_MAP2_BS"/>
</dbReference>
<dbReference type="InterPro" id="IPR036388">
    <property type="entry name" value="WH-like_DNA-bd_sf"/>
</dbReference>
<dbReference type="InterPro" id="IPR036390">
    <property type="entry name" value="WH_DNA-bd_sf"/>
</dbReference>
<dbReference type="NCBIfam" id="TIGR00501">
    <property type="entry name" value="met_pdase_II"/>
    <property type="match status" value="1"/>
</dbReference>
<dbReference type="PANTHER" id="PTHR45777">
    <property type="entry name" value="METHIONINE AMINOPEPTIDASE 2"/>
    <property type="match status" value="1"/>
</dbReference>
<dbReference type="PANTHER" id="PTHR45777:SF1">
    <property type="entry name" value="METHIONINE AMINOPEPTIDASE 2-2"/>
    <property type="match status" value="1"/>
</dbReference>
<dbReference type="Pfam" id="PF00557">
    <property type="entry name" value="Peptidase_M24"/>
    <property type="match status" value="1"/>
</dbReference>
<dbReference type="PRINTS" id="PR00599">
    <property type="entry name" value="MAPEPTIDASE"/>
</dbReference>
<dbReference type="SUPFAM" id="SSF55920">
    <property type="entry name" value="Creatinase/aminopeptidase"/>
    <property type="match status" value="1"/>
</dbReference>
<dbReference type="SUPFAM" id="SSF46785">
    <property type="entry name" value="Winged helix' DNA-binding domain"/>
    <property type="match status" value="1"/>
</dbReference>
<dbReference type="PROSITE" id="PS01202">
    <property type="entry name" value="MAP_2"/>
    <property type="match status" value="1"/>
</dbReference>
<keyword id="KW-0031">Aminopeptidase</keyword>
<keyword id="KW-0963">Cytoplasm</keyword>
<keyword id="KW-0378">Hydrolase</keyword>
<keyword id="KW-0479">Metal-binding</keyword>
<keyword id="KW-0645">Protease</keyword>
<accession>C5GLJ6</accession>
<evidence type="ECO:0000255" key="1">
    <source>
        <dbReference type="HAMAP-Rule" id="MF_03175"/>
    </source>
</evidence>
<evidence type="ECO:0000256" key="2">
    <source>
        <dbReference type="SAM" id="MobiDB-lite"/>
    </source>
</evidence>
<name>MAP22_AJEDR</name>
<protein>
    <recommendedName>
        <fullName evidence="1">Methionine aminopeptidase 2-2</fullName>
        <shortName evidence="1">MAP 2-2</shortName>
        <shortName evidence="1">MetAP 2-2</shortName>
        <ecNumber evidence="1">3.4.11.18</ecNumber>
    </recommendedName>
    <alternativeName>
        <fullName evidence="1">Peptidase M</fullName>
    </alternativeName>
</protein>